<feature type="chain" id="PRO_0000048852" description="Homeobox protein CDX-4">
    <location>
        <begin position="1"/>
        <end position="284"/>
    </location>
</feature>
<feature type="DNA-binding region" description="Homeobox" evidence="1">
    <location>
        <begin position="173"/>
        <end position="232"/>
    </location>
</feature>
<feature type="region of interest" description="Disordered" evidence="2">
    <location>
        <begin position="15"/>
        <end position="40"/>
    </location>
</feature>
<feature type="region of interest" description="Disordered" evidence="2">
    <location>
        <begin position="120"/>
        <end position="155"/>
    </location>
</feature>
<feature type="region of interest" description="Disordered" evidence="2">
    <location>
        <begin position="238"/>
        <end position="259"/>
    </location>
</feature>
<feature type="compositionally biased region" description="Gly residues" evidence="2">
    <location>
        <begin position="22"/>
        <end position="37"/>
    </location>
</feature>
<feature type="compositionally biased region" description="Polar residues" evidence="2">
    <location>
        <begin position="238"/>
        <end position="253"/>
    </location>
</feature>
<evidence type="ECO:0000255" key="1">
    <source>
        <dbReference type="PROSITE-ProRule" id="PRU00108"/>
    </source>
</evidence>
<evidence type="ECO:0000256" key="2">
    <source>
        <dbReference type="SAM" id="MobiDB-lite"/>
    </source>
</evidence>
<evidence type="ECO:0000305" key="3"/>
<reference key="1">
    <citation type="submission" date="1997-05" db="EMBL/GenBank/DDBJ databases">
        <authorList>
            <person name="Chen E.Y."/>
            <person name="States D.J."/>
            <person name="Mazzarella R."/>
        </authorList>
    </citation>
    <scope>NUCLEOTIDE SEQUENCE [GENOMIC DNA]</scope>
</reference>
<reference key="2">
    <citation type="submission" date="1997-10" db="EMBL/GenBank/DDBJ databases">
        <title>Genomic structure of the human CDX4 gene: a potential candidate for the FG syndrome.</title>
        <authorList>
            <person name="Chiaroni P."/>
            <person name="Colleaux L."/>
            <person name="Briault S."/>
            <person name="Lossi A.M."/>
            <person name="Moraine C."/>
            <person name="Fontes M."/>
        </authorList>
    </citation>
    <scope>NUCLEOTIDE SEQUENCE [GENOMIC DNA]</scope>
</reference>
<reference key="3">
    <citation type="journal article" date="2005" name="Nature">
        <title>The DNA sequence of the human X chromosome.</title>
        <authorList>
            <person name="Ross M.T."/>
            <person name="Grafham D.V."/>
            <person name="Coffey A.J."/>
            <person name="Scherer S."/>
            <person name="McLay K."/>
            <person name="Muzny D."/>
            <person name="Platzer M."/>
            <person name="Howell G.R."/>
            <person name="Burrows C."/>
            <person name="Bird C.P."/>
            <person name="Frankish A."/>
            <person name="Lovell F.L."/>
            <person name="Howe K.L."/>
            <person name="Ashurst J.L."/>
            <person name="Fulton R.S."/>
            <person name="Sudbrak R."/>
            <person name="Wen G."/>
            <person name="Jones M.C."/>
            <person name="Hurles M.E."/>
            <person name="Andrews T.D."/>
            <person name="Scott C.E."/>
            <person name="Searle S."/>
            <person name="Ramser J."/>
            <person name="Whittaker A."/>
            <person name="Deadman R."/>
            <person name="Carter N.P."/>
            <person name="Hunt S.E."/>
            <person name="Chen R."/>
            <person name="Cree A."/>
            <person name="Gunaratne P."/>
            <person name="Havlak P."/>
            <person name="Hodgson A."/>
            <person name="Metzker M.L."/>
            <person name="Richards S."/>
            <person name="Scott G."/>
            <person name="Steffen D."/>
            <person name="Sodergren E."/>
            <person name="Wheeler D.A."/>
            <person name="Worley K.C."/>
            <person name="Ainscough R."/>
            <person name="Ambrose K.D."/>
            <person name="Ansari-Lari M.A."/>
            <person name="Aradhya S."/>
            <person name="Ashwell R.I."/>
            <person name="Babbage A.K."/>
            <person name="Bagguley C.L."/>
            <person name="Ballabio A."/>
            <person name="Banerjee R."/>
            <person name="Barker G.E."/>
            <person name="Barlow K.F."/>
            <person name="Barrett I.P."/>
            <person name="Bates K.N."/>
            <person name="Beare D.M."/>
            <person name="Beasley H."/>
            <person name="Beasley O."/>
            <person name="Beck A."/>
            <person name="Bethel G."/>
            <person name="Blechschmidt K."/>
            <person name="Brady N."/>
            <person name="Bray-Allen S."/>
            <person name="Bridgeman A.M."/>
            <person name="Brown A.J."/>
            <person name="Brown M.J."/>
            <person name="Bonnin D."/>
            <person name="Bruford E.A."/>
            <person name="Buhay C."/>
            <person name="Burch P."/>
            <person name="Burford D."/>
            <person name="Burgess J."/>
            <person name="Burrill W."/>
            <person name="Burton J."/>
            <person name="Bye J.M."/>
            <person name="Carder C."/>
            <person name="Carrel L."/>
            <person name="Chako J."/>
            <person name="Chapman J.C."/>
            <person name="Chavez D."/>
            <person name="Chen E."/>
            <person name="Chen G."/>
            <person name="Chen Y."/>
            <person name="Chen Z."/>
            <person name="Chinault C."/>
            <person name="Ciccodicola A."/>
            <person name="Clark S.Y."/>
            <person name="Clarke G."/>
            <person name="Clee C.M."/>
            <person name="Clegg S."/>
            <person name="Clerc-Blankenburg K."/>
            <person name="Clifford K."/>
            <person name="Cobley V."/>
            <person name="Cole C.G."/>
            <person name="Conquer J.S."/>
            <person name="Corby N."/>
            <person name="Connor R.E."/>
            <person name="David R."/>
            <person name="Davies J."/>
            <person name="Davis C."/>
            <person name="Davis J."/>
            <person name="Delgado O."/>
            <person name="Deshazo D."/>
            <person name="Dhami P."/>
            <person name="Ding Y."/>
            <person name="Dinh H."/>
            <person name="Dodsworth S."/>
            <person name="Draper H."/>
            <person name="Dugan-Rocha S."/>
            <person name="Dunham A."/>
            <person name="Dunn M."/>
            <person name="Durbin K.J."/>
            <person name="Dutta I."/>
            <person name="Eades T."/>
            <person name="Ellwood M."/>
            <person name="Emery-Cohen A."/>
            <person name="Errington H."/>
            <person name="Evans K.L."/>
            <person name="Faulkner L."/>
            <person name="Francis F."/>
            <person name="Frankland J."/>
            <person name="Fraser A.E."/>
            <person name="Galgoczy P."/>
            <person name="Gilbert J."/>
            <person name="Gill R."/>
            <person name="Gloeckner G."/>
            <person name="Gregory S.G."/>
            <person name="Gribble S."/>
            <person name="Griffiths C."/>
            <person name="Grocock R."/>
            <person name="Gu Y."/>
            <person name="Gwilliam R."/>
            <person name="Hamilton C."/>
            <person name="Hart E.A."/>
            <person name="Hawes A."/>
            <person name="Heath P.D."/>
            <person name="Heitmann K."/>
            <person name="Hennig S."/>
            <person name="Hernandez J."/>
            <person name="Hinzmann B."/>
            <person name="Ho S."/>
            <person name="Hoffs M."/>
            <person name="Howden P.J."/>
            <person name="Huckle E.J."/>
            <person name="Hume J."/>
            <person name="Hunt P.J."/>
            <person name="Hunt A.R."/>
            <person name="Isherwood J."/>
            <person name="Jacob L."/>
            <person name="Johnson D."/>
            <person name="Jones S."/>
            <person name="de Jong P.J."/>
            <person name="Joseph S.S."/>
            <person name="Keenan S."/>
            <person name="Kelly S."/>
            <person name="Kershaw J.K."/>
            <person name="Khan Z."/>
            <person name="Kioschis P."/>
            <person name="Klages S."/>
            <person name="Knights A.J."/>
            <person name="Kosiura A."/>
            <person name="Kovar-Smith C."/>
            <person name="Laird G.K."/>
            <person name="Langford C."/>
            <person name="Lawlor S."/>
            <person name="Leversha M."/>
            <person name="Lewis L."/>
            <person name="Liu W."/>
            <person name="Lloyd C."/>
            <person name="Lloyd D.M."/>
            <person name="Loulseged H."/>
            <person name="Loveland J.E."/>
            <person name="Lovell J.D."/>
            <person name="Lozado R."/>
            <person name="Lu J."/>
            <person name="Lyne R."/>
            <person name="Ma J."/>
            <person name="Maheshwari M."/>
            <person name="Matthews L.H."/>
            <person name="McDowall J."/>
            <person name="McLaren S."/>
            <person name="McMurray A."/>
            <person name="Meidl P."/>
            <person name="Meitinger T."/>
            <person name="Milne S."/>
            <person name="Miner G."/>
            <person name="Mistry S.L."/>
            <person name="Morgan M."/>
            <person name="Morris S."/>
            <person name="Mueller I."/>
            <person name="Mullikin J.C."/>
            <person name="Nguyen N."/>
            <person name="Nordsiek G."/>
            <person name="Nyakatura G."/>
            <person name="O'dell C.N."/>
            <person name="Okwuonu G."/>
            <person name="Palmer S."/>
            <person name="Pandian R."/>
            <person name="Parker D."/>
            <person name="Parrish J."/>
            <person name="Pasternak S."/>
            <person name="Patel D."/>
            <person name="Pearce A.V."/>
            <person name="Pearson D.M."/>
            <person name="Pelan S.E."/>
            <person name="Perez L."/>
            <person name="Porter K.M."/>
            <person name="Ramsey Y."/>
            <person name="Reichwald K."/>
            <person name="Rhodes S."/>
            <person name="Ridler K.A."/>
            <person name="Schlessinger D."/>
            <person name="Schueler M.G."/>
            <person name="Sehra H.K."/>
            <person name="Shaw-Smith C."/>
            <person name="Shen H."/>
            <person name="Sheridan E.M."/>
            <person name="Shownkeen R."/>
            <person name="Skuce C.D."/>
            <person name="Smith M.L."/>
            <person name="Sotheran E.C."/>
            <person name="Steingruber H.E."/>
            <person name="Steward C.A."/>
            <person name="Storey R."/>
            <person name="Swann R.M."/>
            <person name="Swarbreck D."/>
            <person name="Tabor P.E."/>
            <person name="Taudien S."/>
            <person name="Taylor T."/>
            <person name="Teague B."/>
            <person name="Thomas K."/>
            <person name="Thorpe A."/>
            <person name="Timms K."/>
            <person name="Tracey A."/>
            <person name="Trevanion S."/>
            <person name="Tromans A.C."/>
            <person name="d'Urso M."/>
            <person name="Verduzco D."/>
            <person name="Villasana D."/>
            <person name="Waldron L."/>
            <person name="Wall M."/>
            <person name="Wang Q."/>
            <person name="Warren J."/>
            <person name="Warry G.L."/>
            <person name="Wei X."/>
            <person name="West A."/>
            <person name="Whitehead S.L."/>
            <person name="Whiteley M.N."/>
            <person name="Wilkinson J.E."/>
            <person name="Willey D.L."/>
            <person name="Williams G."/>
            <person name="Williams L."/>
            <person name="Williamson A."/>
            <person name="Williamson H."/>
            <person name="Wilming L."/>
            <person name="Woodmansey R.L."/>
            <person name="Wray P.W."/>
            <person name="Yen J."/>
            <person name="Zhang J."/>
            <person name="Zhou J."/>
            <person name="Zoghbi H."/>
            <person name="Zorilla S."/>
            <person name="Buck D."/>
            <person name="Reinhardt R."/>
            <person name="Poustka A."/>
            <person name="Rosenthal A."/>
            <person name="Lehrach H."/>
            <person name="Meindl A."/>
            <person name="Minx P.J."/>
            <person name="Hillier L.W."/>
            <person name="Willard H.F."/>
            <person name="Wilson R.K."/>
            <person name="Waterston R.H."/>
            <person name="Rice C.M."/>
            <person name="Vaudin M."/>
            <person name="Coulson A."/>
            <person name="Nelson D.L."/>
            <person name="Weinstock G."/>
            <person name="Sulston J.E."/>
            <person name="Durbin R.M."/>
            <person name="Hubbard T."/>
            <person name="Gibbs R.A."/>
            <person name="Beck S."/>
            <person name="Rogers J."/>
            <person name="Bentley D.R."/>
        </authorList>
    </citation>
    <scope>NUCLEOTIDE SEQUENCE [LARGE SCALE GENOMIC DNA]</scope>
</reference>
<reference key="4">
    <citation type="submission" date="2005-09" db="EMBL/GenBank/DDBJ databases">
        <authorList>
            <person name="Mural R.J."/>
            <person name="Istrail S."/>
            <person name="Sutton G.G."/>
            <person name="Florea L."/>
            <person name="Halpern A.L."/>
            <person name="Mobarry C.M."/>
            <person name="Lippert R."/>
            <person name="Walenz B."/>
            <person name="Shatkay H."/>
            <person name="Dew I."/>
            <person name="Miller J.R."/>
            <person name="Flanigan M.J."/>
            <person name="Edwards N.J."/>
            <person name="Bolanos R."/>
            <person name="Fasulo D."/>
            <person name="Halldorsson B.V."/>
            <person name="Hannenhalli S."/>
            <person name="Turner R."/>
            <person name="Yooseph S."/>
            <person name="Lu F."/>
            <person name="Nusskern D.R."/>
            <person name="Shue B.C."/>
            <person name="Zheng X.H."/>
            <person name="Zhong F."/>
            <person name="Delcher A.L."/>
            <person name="Huson D.H."/>
            <person name="Kravitz S.A."/>
            <person name="Mouchard L."/>
            <person name="Reinert K."/>
            <person name="Remington K.A."/>
            <person name="Clark A.G."/>
            <person name="Waterman M.S."/>
            <person name="Eichler E.E."/>
            <person name="Adams M.D."/>
            <person name="Hunkapiller M.W."/>
            <person name="Myers E.W."/>
            <person name="Venter J.C."/>
        </authorList>
    </citation>
    <scope>NUCLEOTIDE SEQUENCE [LARGE SCALE GENOMIC DNA]</scope>
</reference>
<reference key="5">
    <citation type="journal article" date="2004" name="Genome Res.">
        <title>The status, quality, and expansion of the NIH full-length cDNA project: the Mammalian Gene Collection (MGC).</title>
        <authorList>
            <consortium name="The MGC Project Team"/>
        </authorList>
    </citation>
    <scope>NUCLEOTIDE SEQUENCE [LARGE SCALE MRNA]</scope>
</reference>
<organism>
    <name type="scientific">Homo sapiens</name>
    <name type="common">Human</name>
    <dbReference type="NCBI Taxonomy" id="9606"/>
    <lineage>
        <taxon>Eukaryota</taxon>
        <taxon>Metazoa</taxon>
        <taxon>Chordata</taxon>
        <taxon>Craniata</taxon>
        <taxon>Vertebrata</taxon>
        <taxon>Euteleostomi</taxon>
        <taxon>Mammalia</taxon>
        <taxon>Eutheria</taxon>
        <taxon>Euarchontoglires</taxon>
        <taxon>Primates</taxon>
        <taxon>Haplorrhini</taxon>
        <taxon>Catarrhini</taxon>
        <taxon>Hominidae</taxon>
        <taxon>Homo</taxon>
    </lineage>
</organism>
<accession>O14627</accession>
<accession>A1A513</accession>
<accession>Q5JS20</accession>
<proteinExistence type="evidence at protein level"/>
<dbReference type="EMBL" id="AF003530">
    <property type="protein sequence ID" value="AAB66319.1"/>
    <property type="molecule type" value="Genomic_DNA"/>
</dbReference>
<dbReference type="EMBL" id="AF029879">
    <property type="protein sequence ID" value="AAD01894.1"/>
    <property type="molecule type" value="Genomic_DNA"/>
</dbReference>
<dbReference type="EMBL" id="AF029877">
    <property type="protein sequence ID" value="AAD01894.1"/>
    <property type="status" value="JOINED"/>
    <property type="molecule type" value="Genomic_DNA"/>
</dbReference>
<dbReference type="EMBL" id="AF029878">
    <property type="protein sequence ID" value="AAD01894.1"/>
    <property type="status" value="JOINED"/>
    <property type="molecule type" value="Genomic_DNA"/>
</dbReference>
<dbReference type="EMBL" id="AL450108">
    <property type="status" value="NOT_ANNOTATED_CDS"/>
    <property type="molecule type" value="Genomic_DNA"/>
</dbReference>
<dbReference type="EMBL" id="CH471104">
    <property type="protein sequence ID" value="EAW98667.1"/>
    <property type="molecule type" value="Genomic_DNA"/>
</dbReference>
<dbReference type="EMBL" id="BC128233">
    <property type="protein sequence ID" value="AAI28234.1"/>
    <property type="molecule type" value="mRNA"/>
</dbReference>
<dbReference type="CCDS" id="CCDS14424.1"/>
<dbReference type="RefSeq" id="NP_005184.1">
    <property type="nucleotide sequence ID" value="NM_005193.2"/>
</dbReference>
<dbReference type="SMR" id="O14627"/>
<dbReference type="BioGRID" id="107476">
    <property type="interactions" value="9"/>
</dbReference>
<dbReference type="FunCoup" id="O14627">
    <property type="interactions" value="152"/>
</dbReference>
<dbReference type="IntAct" id="O14627">
    <property type="interactions" value="8"/>
</dbReference>
<dbReference type="STRING" id="9606.ENSP00000362613"/>
<dbReference type="PhosphoSitePlus" id="O14627"/>
<dbReference type="BioMuta" id="CDX4"/>
<dbReference type="MassIVE" id="O14627"/>
<dbReference type="PaxDb" id="9606-ENSP00000362613"/>
<dbReference type="PeptideAtlas" id="O14627"/>
<dbReference type="Antibodypedia" id="13757">
    <property type="antibodies" value="294 antibodies from 33 providers"/>
</dbReference>
<dbReference type="DNASU" id="1046"/>
<dbReference type="Ensembl" id="ENST00000373514.3">
    <property type="protein sequence ID" value="ENSP00000362613.1"/>
    <property type="gene ID" value="ENSG00000131264.4"/>
</dbReference>
<dbReference type="GeneID" id="1046"/>
<dbReference type="KEGG" id="hsa:1046"/>
<dbReference type="MANE-Select" id="ENST00000373514.3">
    <property type="protein sequence ID" value="ENSP00000362613.1"/>
    <property type="RefSeq nucleotide sequence ID" value="NM_005193.2"/>
    <property type="RefSeq protein sequence ID" value="NP_005184.1"/>
</dbReference>
<dbReference type="UCSC" id="uc011mqk.3">
    <property type="organism name" value="human"/>
</dbReference>
<dbReference type="AGR" id="HGNC:1808"/>
<dbReference type="CTD" id="1046"/>
<dbReference type="DisGeNET" id="1046"/>
<dbReference type="GeneCards" id="CDX4"/>
<dbReference type="HGNC" id="HGNC:1808">
    <property type="gene designation" value="CDX4"/>
</dbReference>
<dbReference type="HPA" id="ENSG00000131264">
    <property type="expression patterns" value="Tissue enriched (skin)"/>
</dbReference>
<dbReference type="MIM" id="300025">
    <property type="type" value="gene"/>
</dbReference>
<dbReference type="neXtProt" id="NX_O14627"/>
<dbReference type="OpenTargets" id="ENSG00000131264"/>
<dbReference type="PharmGKB" id="PA26353"/>
<dbReference type="VEuPathDB" id="HostDB:ENSG00000131264"/>
<dbReference type="eggNOG" id="KOG0848">
    <property type="taxonomic scope" value="Eukaryota"/>
</dbReference>
<dbReference type="GeneTree" id="ENSGT00940000162554"/>
<dbReference type="HOGENOM" id="CLU_073177_0_0_1"/>
<dbReference type="InParanoid" id="O14627"/>
<dbReference type="OMA" id="YPHMPGM"/>
<dbReference type="OrthoDB" id="6159439at2759"/>
<dbReference type="PAN-GO" id="O14627">
    <property type="GO annotations" value="8 GO annotations based on evolutionary models"/>
</dbReference>
<dbReference type="PhylomeDB" id="O14627"/>
<dbReference type="TreeFam" id="TF351605"/>
<dbReference type="PathwayCommons" id="O14627"/>
<dbReference type="SignaLink" id="O14627"/>
<dbReference type="BioGRID-ORCS" id="1046">
    <property type="hits" value="10 hits in 787 CRISPR screens"/>
</dbReference>
<dbReference type="GenomeRNAi" id="1046"/>
<dbReference type="Pharos" id="O14627">
    <property type="development level" value="Tbio"/>
</dbReference>
<dbReference type="PRO" id="PR:O14627"/>
<dbReference type="Proteomes" id="UP000005640">
    <property type="component" value="Chromosome X"/>
</dbReference>
<dbReference type="RNAct" id="O14627">
    <property type="molecule type" value="protein"/>
</dbReference>
<dbReference type="Bgee" id="ENSG00000131264">
    <property type="expression patterns" value="Expressed in skin of abdomen and 6 other cell types or tissues"/>
</dbReference>
<dbReference type="GO" id="GO:0000785">
    <property type="term" value="C:chromatin"/>
    <property type="evidence" value="ECO:0000247"/>
    <property type="project" value="NTNU_SB"/>
</dbReference>
<dbReference type="GO" id="GO:0005634">
    <property type="term" value="C:nucleus"/>
    <property type="evidence" value="ECO:0000318"/>
    <property type="project" value="GO_Central"/>
</dbReference>
<dbReference type="GO" id="GO:0001228">
    <property type="term" value="F:DNA-binding transcription activator activity, RNA polymerase II-specific"/>
    <property type="evidence" value="ECO:0000314"/>
    <property type="project" value="NTNU_SB"/>
</dbReference>
<dbReference type="GO" id="GO:0003700">
    <property type="term" value="F:DNA-binding transcription factor activity"/>
    <property type="evidence" value="ECO:0000318"/>
    <property type="project" value="GO_Central"/>
</dbReference>
<dbReference type="GO" id="GO:0000981">
    <property type="term" value="F:DNA-binding transcription factor activity, RNA polymerase II-specific"/>
    <property type="evidence" value="ECO:0000247"/>
    <property type="project" value="NTNU_SB"/>
</dbReference>
<dbReference type="GO" id="GO:0000978">
    <property type="term" value="F:RNA polymerase II cis-regulatory region sequence-specific DNA binding"/>
    <property type="evidence" value="ECO:0000314"/>
    <property type="project" value="NTNU_SB"/>
</dbReference>
<dbReference type="GO" id="GO:0000977">
    <property type="term" value="F:RNA polymerase II transcription regulatory region sequence-specific DNA binding"/>
    <property type="evidence" value="ECO:0000318"/>
    <property type="project" value="GO_Central"/>
</dbReference>
<dbReference type="GO" id="GO:1990837">
    <property type="term" value="F:sequence-specific double-stranded DNA binding"/>
    <property type="evidence" value="ECO:0000314"/>
    <property type="project" value="ARUK-UCL"/>
</dbReference>
<dbReference type="GO" id="GO:0009948">
    <property type="term" value="P:anterior/posterior axis specification"/>
    <property type="evidence" value="ECO:0000318"/>
    <property type="project" value="GO_Central"/>
</dbReference>
<dbReference type="GO" id="GO:0001568">
    <property type="term" value="P:blood vessel development"/>
    <property type="evidence" value="ECO:0007669"/>
    <property type="project" value="Ensembl"/>
</dbReference>
<dbReference type="GO" id="GO:0030154">
    <property type="term" value="P:cell differentiation"/>
    <property type="evidence" value="ECO:0000318"/>
    <property type="project" value="GO_Central"/>
</dbReference>
<dbReference type="GO" id="GO:0048565">
    <property type="term" value="P:digestive tract development"/>
    <property type="evidence" value="ECO:0000318"/>
    <property type="project" value="GO_Central"/>
</dbReference>
<dbReference type="GO" id="GO:0009880">
    <property type="term" value="P:embryonic pattern specification"/>
    <property type="evidence" value="ECO:0000318"/>
    <property type="project" value="GO_Central"/>
</dbReference>
<dbReference type="GO" id="GO:0060711">
    <property type="term" value="P:labyrinthine layer development"/>
    <property type="evidence" value="ECO:0007669"/>
    <property type="project" value="Ensembl"/>
</dbReference>
<dbReference type="GO" id="GO:0000122">
    <property type="term" value="P:negative regulation of transcription by RNA polymerase II"/>
    <property type="evidence" value="ECO:0007669"/>
    <property type="project" value="Ensembl"/>
</dbReference>
<dbReference type="GO" id="GO:0045944">
    <property type="term" value="P:positive regulation of transcription by RNA polymerase II"/>
    <property type="evidence" value="ECO:0000314"/>
    <property type="project" value="NTNU_SB"/>
</dbReference>
<dbReference type="GO" id="GO:0006357">
    <property type="term" value="P:regulation of transcription by RNA polymerase II"/>
    <property type="evidence" value="ECO:0000318"/>
    <property type="project" value="GO_Central"/>
</dbReference>
<dbReference type="CDD" id="cd00086">
    <property type="entry name" value="homeodomain"/>
    <property type="match status" value="1"/>
</dbReference>
<dbReference type="FunFam" id="1.10.10.60:FF:000089">
    <property type="entry name" value="Caudal type homeobox 4"/>
    <property type="match status" value="1"/>
</dbReference>
<dbReference type="Gene3D" id="1.10.10.60">
    <property type="entry name" value="Homeodomain-like"/>
    <property type="match status" value="1"/>
</dbReference>
<dbReference type="InterPro" id="IPR006820">
    <property type="entry name" value="Caudal_activation_dom"/>
</dbReference>
<dbReference type="InterPro" id="IPR047152">
    <property type="entry name" value="Caudal_homeobox"/>
</dbReference>
<dbReference type="InterPro" id="IPR001356">
    <property type="entry name" value="HD"/>
</dbReference>
<dbReference type="InterPro" id="IPR020479">
    <property type="entry name" value="HD_metazoa"/>
</dbReference>
<dbReference type="InterPro" id="IPR017970">
    <property type="entry name" value="Homeobox_CS"/>
</dbReference>
<dbReference type="InterPro" id="IPR009057">
    <property type="entry name" value="Homeodomain-like_sf"/>
</dbReference>
<dbReference type="InterPro" id="IPR000047">
    <property type="entry name" value="HTH_motif"/>
</dbReference>
<dbReference type="PANTHER" id="PTHR24332">
    <property type="entry name" value="HOMEOBOX PROTEIN CDX"/>
    <property type="match status" value="1"/>
</dbReference>
<dbReference type="PANTHER" id="PTHR24332:SF15">
    <property type="entry name" value="HOMEOBOX PROTEIN CDX-4"/>
    <property type="match status" value="1"/>
</dbReference>
<dbReference type="Pfam" id="PF04731">
    <property type="entry name" value="Caudal_act"/>
    <property type="match status" value="1"/>
</dbReference>
<dbReference type="Pfam" id="PF00046">
    <property type="entry name" value="Homeodomain"/>
    <property type="match status" value="1"/>
</dbReference>
<dbReference type="PRINTS" id="PR00024">
    <property type="entry name" value="HOMEOBOX"/>
</dbReference>
<dbReference type="PRINTS" id="PR00031">
    <property type="entry name" value="HTHREPRESSR"/>
</dbReference>
<dbReference type="SMART" id="SM00389">
    <property type="entry name" value="HOX"/>
    <property type="match status" value="1"/>
</dbReference>
<dbReference type="SUPFAM" id="SSF46689">
    <property type="entry name" value="Homeodomain-like"/>
    <property type="match status" value="1"/>
</dbReference>
<dbReference type="PROSITE" id="PS00027">
    <property type="entry name" value="HOMEOBOX_1"/>
    <property type="match status" value="1"/>
</dbReference>
<dbReference type="PROSITE" id="PS50071">
    <property type="entry name" value="HOMEOBOX_2"/>
    <property type="match status" value="1"/>
</dbReference>
<gene>
    <name type="primary">CDX4</name>
</gene>
<comment type="interaction">
    <interactant intactId="EBI-10181162">
        <id>O14627</id>
    </interactant>
    <interactant intactId="EBI-16429296">
        <id>Q8N9N5-7</id>
        <label>BANP</label>
    </interactant>
    <organismsDiffer>false</organismsDiffer>
    <experiments>3</experiments>
</comment>
<comment type="interaction">
    <interactant intactId="EBI-10181162">
        <id>O14627</id>
    </interactant>
    <interactant intactId="EBI-456371">
        <id>P61024</id>
        <label>CKS1B</label>
    </interactant>
    <organismsDiffer>false</organismsDiffer>
    <experiments>3</experiments>
</comment>
<comment type="interaction">
    <interactant intactId="EBI-10181162">
        <id>O14627</id>
    </interactant>
    <interactant intactId="EBI-8639312">
        <id>P25800</id>
        <label>LMO1</label>
    </interactant>
    <organismsDiffer>false</organismsDiffer>
    <experiments>3</experiments>
</comment>
<comment type="interaction">
    <interactant intactId="EBI-10181162">
        <id>O14627</id>
    </interactant>
    <interactant intactId="EBI-739696">
        <id>P25791</id>
        <label>LMO2</label>
    </interactant>
    <organismsDiffer>false</organismsDiffer>
    <experiments>3</experiments>
</comment>
<comment type="interaction">
    <interactant intactId="EBI-10181162">
        <id>O14627</id>
    </interactant>
    <interactant intactId="EBI-1181405">
        <id>Q13131</id>
        <label>PRKAA1</label>
    </interactant>
    <organismsDiffer>false</organismsDiffer>
    <experiments>3</experiments>
</comment>
<comment type="interaction">
    <interactant intactId="EBI-10181162">
        <id>O14627</id>
    </interactant>
    <interactant intactId="EBI-1383852">
        <id>P54646</id>
        <label>PRKAA2</label>
    </interactant>
    <organismsDiffer>false</organismsDiffer>
    <experiments>3</experiments>
</comment>
<comment type="interaction">
    <interactant intactId="EBI-10181162">
        <id>O14627</id>
    </interactant>
    <interactant intactId="EBI-1053424">
        <id>O43741</id>
        <label>PRKAB2</label>
    </interactant>
    <organismsDiffer>false</organismsDiffer>
    <experiments>5</experiments>
</comment>
<comment type="subcellular location">
    <subcellularLocation>
        <location evidence="1">Nucleus</location>
    </subcellularLocation>
</comment>
<comment type="similarity">
    <text evidence="3">Belongs to the Caudal homeobox family.</text>
</comment>
<name>CDX4_HUMAN</name>
<keyword id="KW-0217">Developmental protein</keyword>
<keyword id="KW-0238">DNA-binding</keyword>
<keyword id="KW-0371">Homeobox</keyword>
<keyword id="KW-0539">Nucleus</keyword>
<keyword id="KW-1185">Reference proteome</keyword>
<keyword id="KW-0804">Transcription</keyword>
<keyword id="KW-0805">Transcription regulation</keyword>
<protein>
    <recommendedName>
        <fullName>Homeobox protein CDX-4</fullName>
    </recommendedName>
    <alternativeName>
        <fullName>Caudal-type homeobox protein 4</fullName>
    </alternativeName>
</protein>
<sequence length="284" mass="30480">MYGSCLLEKEAGMYPGTLMSPGGDGTAGTGGTGGGGSPMPASNFAAAPAFSHYMGYPHMPSMDPHWPSLGVWGSPYSPPREDWSVYPGPSSTMGTVPVNDVTSSPAAFCSTDYSNLGPVGGGTSGSSLPGQAGGSLVPTDAGAAKASSPSRSRHSPYAWMRKTVQVTGKTRTKEKYRVVYTDHQRLELEKEFHCNRYITIQRKSELAVNLGLSERQVKIWFQNRRAKERKMIKKKISQFENSGGSVQSDSDSISPGELPNTFFTTPSAVRGFQPIEIQQVIVSE</sequence>